<keyword id="KW-0963">Cytoplasm</keyword>
<keyword id="KW-0413">Isomerase</keyword>
<keyword id="KW-0627">Porphyrin biosynthesis</keyword>
<keyword id="KW-0663">Pyridoxal phosphate</keyword>
<keyword id="KW-1185">Reference proteome</keyword>
<reference key="1">
    <citation type="journal article" date="2002" name="Environ. Microbiol.">
        <title>Complete genome sequence and comparative analysis of the metabolically versatile Pseudomonas putida KT2440.</title>
        <authorList>
            <person name="Nelson K.E."/>
            <person name="Weinel C."/>
            <person name="Paulsen I.T."/>
            <person name="Dodson R.J."/>
            <person name="Hilbert H."/>
            <person name="Martins dos Santos V.A.P."/>
            <person name="Fouts D.E."/>
            <person name="Gill S.R."/>
            <person name="Pop M."/>
            <person name="Holmes M."/>
            <person name="Brinkac L.M."/>
            <person name="Beanan M.J."/>
            <person name="DeBoy R.T."/>
            <person name="Daugherty S.C."/>
            <person name="Kolonay J.F."/>
            <person name="Madupu R."/>
            <person name="Nelson W.C."/>
            <person name="White O."/>
            <person name="Peterson J.D."/>
            <person name="Khouri H.M."/>
            <person name="Hance I."/>
            <person name="Chris Lee P."/>
            <person name="Holtzapple E.K."/>
            <person name="Scanlan D."/>
            <person name="Tran K."/>
            <person name="Moazzez A."/>
            <person name="Utterback T.R."/>
            <person name="Rizzo M."/>
            <person name="Lee K."/>
            <person name="Kosack D."/>
            <person name="Moestl D."/>
            <person name="Wedler H."/>
            <person name="Lauber J."/>
            <person name="Stjepandic D."/>
            <person name="Hoheisel J."/>
            <person name="Straetz M."/>
            <person name="Heim S."/>
            <person name="Kiewitz C."/>
            <person name="Eisen J.A."/>
            <person name="Timmis K.N."/>
            <person name="Duesterhoeft A."/>
            <person name="Tuemmler B."/>
            <person name="Fraser C.M."/>
        </authorList>
    </citation>
    <scope>NUCLEOTIDE SEQUENCE [LARGE SCALE GENOMIC DNA]</scope>
    <source>
        <strain>ATCC 47054 / DSM 6125 / CFBP 8728 / NCIMB 11950 / KT2440</strain>
    </source>
</reference>
<protein>
    <recommendedName>
        <fullName evidence="1">Glutamate-1-semialdehyde 2,1-aminomutase</fullName>
        <shortName evidence="1">GSA</shortName>
        <ecNumber evidence="1">5.4.3.8</ecNumber>
    </recommendedName>
    <alternativeName>
        <fullName evidence="1">Glutamate-1-semialdehyde aminotransferase</fullName>
        <shortName evidence="1">GSA-AT</shortName>
    </alternativeName>
</protein>
<name>GSA_PSEPK</name>
<organism>
    <name type="scientific">Pseudomonas putida (strain ATCC 47054 / DSM 6125 / CFBP 8728 / NCIMB 11950 / KT2440)</name>
    <dbReference type="NCBI Taxonomy" id="160488"/>
    <lineage>
        <taxon>Bacteria</taxon>
        <taxon>Pseudomonadati</taxon>
        <taxon>Pseudomonadota</taxon>
        <taxon>Gammaproteobacteria</taxon>
        <taxon>Pseudomonadales</taxon>
        <taxon>Pseudomonadaceae</taxon>
        <taxon>Pseudomonas</taxon>
    </lineage>
</organism>
<evidence type="ECO:0000255" key="1">
    <source>
        <dbReference type="HAMAP-Rule" id="MF_00375"/>
    </source>
</evidence>
<comment type="catalytic activity">
    <reaction evidence="1">
        <text>(S)-4-amino-5-oxopentanoate = 5-aminolevulinate</text>
        <dbReference type="Rhea" id="RHEA:14265"/>
        <dbReference type="ChEBI" id="CHEBI:57501"/>
        <dbReference type="ChEBI" id="CHEBI:356416"/>
        <dbReference type="EC" id="5.4.3.8"/>
    </reaction>
</comment>
<comment type="cofactor">
    <cofactor evidence="1">
        <name>pyridoxal 5'-phosphate</name>
        <dbReference type="ChEBI" id="CHEBI:597326"/>
    </cofactor>
</comment>
<comment type="pathway">
    <text evidence="1">Porphyrin-containing compound metabolism; protoporphyrin-IX biosynthesis; 5-aminolevulinate from L-glutamyl-tRNA(Glu): step 2/2.</text>
</comment>
<comment type="subunit">
    <text evidence="1">Homodimer.</text>
</comment>
<comment type="subcellular location">
    <subcellularLocation>
        <location evidence="1">Cytoplasm</location>
    </subcellularLocation>
</comment>
<comment type="similarity">
    <text evidence="1">Belongs to the class-III pyridoxal-phosphate-dependent aminotransferase family. HemL subfamily.</text>
</comment>
<sequence>MSRSEALFAQAQKHIPGGVNSPVRAFKSVGGTPLFFKHAEGAYVVDEDDKRYVDYVGSWGPMILGHGHPDVLDSVRRQLEHGLSYGAPTAMETEMADLVCSIVPSMEMVRMVSSGTEATMSAIRLARGYTGRDAIIKFEGCYHGHSDSLLVKAGSGLLTQGVPSSAGVPADFAKHTLTLPFNDIAAVEKTLAEVGQTVACIIVEPVAGNMNCVPPAPGFLEGLREQCDKHGVVLIFDEVMTGFRVSLGGAQGHYGIKPDLSTFGKIVGGGMPVGCFGGKREIMGCIAPLGPVYQAGTLSGNPLAMAAGLTTLKLISRPGFHAELTDYTSRMLDGLQQRADAAGVPFVTTQAGAMFGLYFSGADDIVTFEDVMASDAERFKRFFHLMLDGGVYLAPSAFEAGFTSIAHGDKELQITLDAAEKAFAALK</sequence>
<dbReference type="EC" id="5.4.3.8" evidence="1"/>
<dbReference type="EMBL" id="AE015451">
    <property type="protein sequence ID" value="AAN70353.1"/>
    <property type="molecule type" value="Genomic_DNA"/>
</dbReference>
<dbReference type="RefSeq" id="NP_746889.1">
    <property type="nucleotide sequence ID" value="NC_002947.4"/>
</dbReference>
<dbReference type="RefSeq" id="WP_010955406.1">
    <property type="nucleotide sequence ID" value="NZ_CP169744.1"/>
</dbReference>
<dbReference type="SMR" id="Q88DP0"/>
<dbReference type="STRING" id="160488.PP_4784"/>
<dbReference type="PaxDb" id="160488-PP_4784"/>
<dbReference type="GeneID" id="83682511"/>
<dbReference type="KEGG" id="ppu:PP_4784"/>
<dbReference type="PATRIC" id="fig|160488.4.peg.5103"/>
<dbReference type="eggNOG" id="COG0001">
    <property type="taxonomic scope" value="Bacteria"/>
</dbReference>
<dbReference type="HOGENOM" id="CLU_016922_1_5_6"/>
<dbReference type="OrthoDB" id="9801052at2"/>
<dbReference type="PhylomeDB" id="Q88DP0"/>
<dbReference type="BioCyc" id="PPUT160488:G1G01-5121-MONOMER"/>
<dbReference type="UniPathway" id="UPA00251">
    <property type="reaction ID" value="UER00317"/>
</dbReference>
<dbReference type="Proteomes" id="UP000000556">
    <property type="component" value="Chromosome"/>
</dbReference>
<dbReference type="GO" id="GO:0005737">
    <property type="term" value="C:cytoplasm"/>
    <property type="evidence" value="ECO:0007669"/>
    <property type="project" value="UniProtKB-SubCell"/>
</dbReference>
<dbReference type="GO" id="GO:0042286">
    <property type="term" value="F:glutamate-1-semialdehyde 2,1-aminomutase activity"/>
    <property type="evidence" value="ECO:0007669"/>
    <property type="project" value="UniProtKB-UniRule"/>
</dbReference>
<dbReference type="GO" id="GO:0030170">
    <property type="term" value="F:pyridoxal phosphate binding"/>
    <property type="evidence" value="ECO:0007669"/>
    <property type="project" value="InterPro"/>
</dbReference>
<dbReference type="GO" id="GO:0008483">
    <property type="term" value="F:transaminase activity"/>
    <property type="evidence" value="ECO:0007669"/>
    <property type="project" value="InterPro"/>
</dbReference>
<dbReference type="GO" id="GO:0006782">
    <property type="term" value="P:protoporphyrinogen IX biosynthetic process"/>
    <property type="evidence" value="ECO:0007669"/>
    <property type="project" value="UniProtKB-UniRule"/>
</dbReference>
<dbReference type="CDD" id="cd00610">
    <property type="entry name" value="OAT_like"/>
    <property type="match status" value="1"/>
</dbReference>
<dbReference type="FunFam" id="3.40.640.10:FF:000021">
    <property type="entry name" value="Glutamate-1-semialdehyde 2,1-aminomutase"/>
    <property type="match status" value="1"/>
</dbReference>
<dbReference type="Gene3D" id="3.90.1150.10">
    <property type="entry name" value="Aspartate Aminotransferase, domain 1"/>
    <property type="match status" value="1"/>
</dbReference>
<dbReference type="Gene3D" id="3.40.640.10">
    <property type="entry name" value="Type I PLP-dependent aspartate aminotransferase-like (Major domain)"/>
    <property type="match status" value="1"/>
</dbReference>
<dbReference type="HAMAP" id="MF_00375">
    <property type="entry name" value="HemL_aminotrans_3"/>
    <property type="match status" value="1"/>
</dbReference>
<dbReference type="InterPro" id="IPR004639">
    <property type="entry name" value="4pyrrol_synth_GluAld_NH2Trfase"/>
</dbReference>
<dbReference type="InterPro" id="IPR005814">
    <property type="entry name" value="Aminotrans_3"/>
</dbReference>
<dbReference type="InterPro" id="IPR049704">
    <property type="entry name" value="Aminotrans_3_PPA_site"/>
</dbReference>
<dbReference type="InterPro" id="IPR015424">
    <property type="entry name" value="PyrdxlP-dep_Trfase"/>
</dbReference>
<dbReference type="InterPro" id="IPR015421">
    <property type="entry name" value="PyrdxlP-dep_Trfase_major"/>
</dbReference>
<dbReference type="InterPro" id="IPR015422">
    <property type="entry name" value="PyrdxlP-dep_Trfase_small"/>
</dbReference>
<dbReference type="NCBIfam" id="TIGR00713">
    <property type="entry name" value="hemL"/>
    <property type="match status" value="1"/>
</dbReference>
<dbReference type="NCBIfam" id="NF000818">
    <property type="entry name" value="PRK00062.1"/>
    <property type="match status" value="1"/>
</dbReference>
<dbReference type="PANTHER" id="PTHR43713">
    <property type="entry name" value="GLUTAMATE-1-SEMIALDEHYDE 2,1-AMINOMUTASE"/>
    <property type="match status" value="1"/>
</dbReference>
<dbReference type="PANTHER" id="PTHR43713:SF3">
    <property type="entry name" value="GLUTAMATE-1-SEMIALDEHYDE 2,1-AMINOMUTASE 1, CHLOROPLASTIC-RELATED"/>
    <property type="match status" value="1"/>
</dbReference>
<dbReference type="Pfam" id="PF00202">
    <property type="entry name" value="Aminotran_3"/>
    <property type="match status" value="1"/>
</dbReference>
<dbReference type="SUPFAM" id="SSF53383">
    <property type="entry name" value="PLP-dependent transferases"/>
    <property type="match status" value="1"/>
</dbReference>
<dbReference type="PROSITE" id="PS00600">
    <property type="entry name" value="AA_TRANSFER_CLASS_3"/>
    <property type="match status" value="1"/>
</dbReference>
<feature type="chain" id="PRO_0000120434" description="Glutamate-1-semialdehyde 2,1-aminomutase">
    <location>
        <begin position="1"/>
        <end position="427"/>
    </location>
</feature>
<feature type="modified residue" description="N6-(pyridoxal phosphate)lysine" evidence="1">
    <location>
        <position position="265"/>
    </location>
</feature>
<gene>
    <name evidence="1" type="primary">hemL</name>
    <name type="ordered locus">PP_4784</name>
</gene>
<proteinExistence type="inferred from homology"/>
<accession>Q88DP0</accession>